<proteinExistence type="inferred from homology"/>
<accession>A4QTY2</accession>
<accession>G4N354</accession>
<feature type="propeptide" id="PRO_0000333654" evidence="2">
    <location>
        <begin position="1"/>
        <end status="unknown"/>
    </location>
</feature>
<feature type="chain" id="PRO_0000333655" description="Metacaspase-1">
    <location>
        <begin status="unknown"/>
        <end position="396"/>
    </location>
</feature>
<feature type="region of interest" description="Disordered" evidence="3">
    <location>
        <begin position="1"/>
        <end position="86"/>
    </location>
</feature>
<feature type="compositionally biased region" description="Gly residues" evidence="3">
    <location>
        <begin position="1"/>
        <end position="20"/>
    </location>
</feature>
<feature type="compositionally biased region" description="Low complexity" evidence="3">
    <location>
        <begin position="47"/>
        <end position="62"/>
    </location>
</feature>
<feature type="compositionally biased region" description="Polar residues" evidence="3">
    <location>
        <begin position="72"/>
        <end position="81"/>
    </location>
</feature>
<feature type="active site" evidence="1">
    <location>
        <position position="186"/>
    </location>
</feature>
<feature type="active site" evidence="1">
    <location>
        <position position="242"/>
    </location>
</feature>
<reference key="1">
    <citation type="journal article" date="2005" name="Nature">
        <title>The genome sequence of the rice blast fungus Magnaporthe grisea.</title>
        <authorList>
            <person name="Dean R.A."/>
            <person name="Talbot N.J."/>
            <person name="Ebbole D.J."/>
            <person name="Farman M.L."/>
            <person name="Mitchell T.K."/>
            <person name="Orbach M.J."/>
            <person name="Thon M.R."/>
            <person name="Kulkarni R."/>
            <person name="Xu J.-R."/>
            <person name="Pan H."/>
            <person name="Read N.D."/>
            <person name="Lee Y.-H."/>
            <person name="Carbone I."/>
            <person name="Brown D."/>
            <person name="Oh Y.Y."/>
            <person name="Donofrio N."/>
            <person name="Jeong J.S."/>
            <person name="Soanes D.M."/>
            <person name="Djonovic S."/>
            <person name="Kolomiets E."/>
            <person name="Rehmeyer C."/>
            <person name="Li W."/>
            <person name="Harding M."/>
            <person name="Kim S."/>
            <person name="Lebrun M.-H."/>
            <person name="Bohnert H."/>
            <person name="Coughlan S."/>
            <person name="Butler J."/>
            <person name="Calvo S.E."/>
            <person name="Ma L.-J."/>
            <person name="Nicol R."/>
            <person name="Purcell S."/>
            <person name="Nusbaum C."/>
            <person name="Galagan J.E."/>
            <person name="Birren B.W."/>
        </authorList>
    </citation>
    <scope>NUCLEOTIDE SEQUENCE [LARGE SCALE GENOMIC DNA]</scope>
    <source>
        <strain>70-15 / ATCC MYA-4617 / FGSC 8958</strain>
    </source>
</reference>
<name>MCA1_PYRO7</name>
<organism>
    <name type="scientific">Pyricularia oryzae (strain 70-15 / ATCC MYA-4617 / FGSC 8958)</name>
    <name type="common">Rice blast fungus</name>
    <name type="synonym">Magnaporthe oryzae</name>
    <dbReference type="NCBI Taxonomy" id="242507"/>
    <lineage>
        <taxon>Eukaryota</taxon>
        <taxon>Fungi</taxon>
        <taxon>Dikarya</taxon>
        <taxon>Ascomycota</taxon>
        <taxon>Pezizomycotina</taxon>
        <taxon>Sordariomycetes</taxon>
        <taxon>Sordariomycetidae</taxon>
        <taxon>Magnaporthales</taxon>
        <taxon>Pyriculariaceae</taxon>
        <taxon>Pyricularia</taxon>
    </lineage>
</organism>
<comment type="function">
    <text evidence="1">Involved in cell death (apoptosis).</text>
</comment>
<comment type="similarity">
    <text evidence="4">Belongs to the peptidase C14B family.</text>
</comment>
<evidence type="ECO:0000250" key="1"/>
<evidence type="ECO:0000255" key="2"/>
<evidence type="ECO:0000256" key="3">
    <source>
        <dbReference type="SAM" id="MobiDB-lite"/>
    </source>
</evidence>
<evidence type="ECO:0000305" key="4"/>
<sequence>MSGYPGQGYQGQGYGQGYGQGYPPQGGYYPPQPGYGGYPPQPPPPQHYQYGPPQGGYQYPPQDGSRAGPSDQAHQPPQGMQQFGHGAPSDYAFQYSQCTGKRKALLIGINYFGQEGELRGCINDVRNLSNFLMEFYQYRREDMVLLTDDAQDPMSQPTRDNIVRAMHWLVEGAQPNDSLFFHYSGHGGQTEDLDGDEDDGYDEVIYPVDFRANGHIVDDDMHLWMVQPLQAGVRLTAIFDSCHSGTALDLPYVYSTSGVLKEPNLAKEAGVGLLGAVQSYARGDLGGVATSLFGFAKKAFSDKQARDRTMRTKTSPADVISWSGSKDDQTSADATIASQATGAMSYAFVSALRANRNQTYNQLLNSIRDILEGQYSQKPQLSCSHPLDTENVWFVM</sequence>
<dbReference type="EC" id="3.4.22.-"/>
<dbReference type="EMBL" id="CM001233">
    <property type="protein sequence ID" value="EHA52610.1"/>
    <property type="molecule type" value="Genomic_DNA"/>
</dbReference>
<dbReference type="RefSeq" id="XP_003712417.1">
    <property type="nucleotide sequence ID" value="XM_003712369.1"/>
</dbReference>
<dbReference type="SMR" id="A4QTY2"/>
<dbReference type="FunCoup" id="A4QTY2">
    <property type="interactions" value="352"/>
</dbReference>
<dbReference type="MEROPS" id="C14.035"/>
<dbReference type="EnsemblFungi" id="MGG_04926T0">
    <property type="protein sequence ID" value="MGG_04926T0"/>
    <property type="gene ID" value="MGG_04926"/>
</dbReference>
<dbReference type="GeneID" id="2675545"/>
<dbReference type="KEGG" id="mgr:MGG_04926"/>
<dbReference type="VEuPathDB" id="FungiDB:MGG_04926"/>
<dbReference type="eggNOG" id="KOG1546">
    <property type="taxonomic scope" value="Eukaryota"/>
</dbReference>
<dbReference type="HOGENOM" id="CLU_029389_0_2_1"/>
<dbReference type="InParanoid" id="A4QTY2"/>
<dbReference type="OMA" id="IRMALQW"/>
<dbReference type="OrthoDB" id="3223806at2759"/>
<dbReference type="Proteomes" id="UP000009058">
    <property type="component" value="Chromosome 3"/>
</dbReference>
<dbReference type="GO" id="GO:0005737">
    <property type="term" value="C:cytoplasm"/>
    <property type="evidence" value="ECO:0007669"/>
    <property type="project" value="TreeGrafter"/>
</dbReference>
<dbReference type="GO" id="GO:0004197">
    <property type="term" value="F:cysteine-type endopeptidase activity"/>
    <property type="evidence" value="ECO:0007669"/>
    <property type="project" value="InterPro"/>
</dbReference>
<dbReference type="GO" id="GO:0006915">
    <property type="term" value="P:apoptotic process"/>
    <property type="evidence" value="ECO:0007669"/>
    <property type="project" value="UniProtKB-KW"/>
</dbReference>
<dbReference type="GO" id="GO:0006508">
    <property type="term" value="P:proteolysis"/>
    <property type="evidence" value="ECO:0007669"/>
    <property type="project" value="UniProtKB-KW"/>
</dbReference>
<dbReference type="Gene3D" id="3.40.50.12660">
    <property type="match status" value="1"/>
</dbReference>
<dbReference type="InterPro" id="IPR029030">
    <property type="entry name" value="Caspase-like_dom_sf"/>
</dbReference>
<dbReference type="InterPro" id="IPR050452">
    <property type="entry name" value="Metacaspase"/>
</dbReference>
<dbReference type="InterPro" id="IPR011600">
    <property type="entry name" value="Pept_C14_caspase"/>
</dbReference>
<dbReference type="PANTHER" id="PTHR48104:SF30">
    <property type="entry name" value="METACASPASE-1"/>
    <property type="match status" value="1"/>
</dbReference>
<dbReference type="PANTHER" id="PTHR48104">
    <property type="entry name" value="METACASPASE-4"/>
    <property type="match status" value="1"/>
</dbReference>
<dbReference type="Pfam" id="PF00656">
    <property type="entry name" value="Peptidase_C14"/>
    <property type="match status" value="1"/>
</dbReference>
<dbReference type="SUPFAM" id="SSF52129">
    <property type="entry name" value="Caspase-like"/>
    <property type="match status" value="1"/>
</dbReference>
<keyword id="KW-0053">Apoptosis</keyword>
<keyword id="KW-0378">Hydrolase</keyword>
<keyword id="KW-0645">Protease</keyword>
<keyword id="KW-1185">Reference proteome</keyword>
<keyword id="KW-0788">Thiol protease</keyword>
<keyword id="KW-0865">Zymogen</keyword>
<gene>
    <name type="primary">MCA1</name>
    <name type="ORF">MGG_04926</name>
</gene>
<protein>
    <recommendedName>
        <fullName>Metacaspase-1</fullName>
        <ecNumber>3.4.22.-</ecNumber>
    </recommendedName>
</protein>